<comment type="function">
    <text evidence="1 2">Degrades mitochondrial transit peptides after their cleavage in the intermembrane space or in the matrix, and presequence peptides; clearance of these peptides is required to keep the presequence processing machinery running (By similarity). Preferentially cleaves the N-terminal side of paired basic amino acid residues (By similarity). Also degrades other unstructured peptides (By similarity). May function as an ATP-dependent peptidase as opposed to a metalloendopeptidase (By similarity).</text>
</comment>
<comment type="cofactor">
    <cofactor evidence="3">
        <name>Zn(2+)</name>
        <dbReference type="ChEBI" id="CHEBI:29105"/>
    </cofactor>
    <text evidence="3">Binds 1 zinc ion per subunit.</text>
</comment>
<comment type="subunit">
    <text evidence="3">Monomer and homodimer; homodimerization is induced by binding of the substrate.</text>
</comment>
<comment type="subcellular location">
    <subcellularLocation>
        <location evidence="2">Mitochondrion intermembrane space</location>
    </subcellularLocation>
    <subcellularLocation>
        <location evidence="2">Mitochondrion matrix</location>
    </subcellularLocation>
</comment>
<comment type="similarity">
    <text evidence="6">Belongs to the peptidase M16 family. PreP subfamily.</text>
</comment>
<protein>
    <recommendedName>
        <fullName>Presequence protease, mitochondrial</fullName>
        <shortName>PreP</shortName>
        <ecNumber evidence="2">3.4.24.-</ecNumber>
    </recommendedName>
    <alternativeName>
        <fullName>Pitrilysin metalloproteinase</fullName>
    </alternativeName>
</protein>
<evidence type="ECO:0000250" key="1">
    <source>
        <dbReference type="UniProtKB" id="A0A8H8UNX0"/>
    </source>
</evidence>
<evidence type="ECO:0000250" key="2">
    <source>
        <dbReference type="UniProtKB" id="P32898"/>
    </source>
</evidence>
<evidence type="ECO:0000250" key="3">
    <source>
        <dbReference type="UniProtKB" id="Q5JRX3"/>
    </source>
</evidence>
<evidence type="ECO:0000250" key="4">
    <source>
        <dbReference type="UniProtKB" id="Q9LJL3"/>
    </source>
</evidence>
<evidence type="ECO:0000255" key="5"/>
<evidence type="ECO:0000305" key="6"/>
<reference key="1">
    <citation type="journal article" date="2004" name="Nature">
        <title>Genome evolution in yeasts.</title>
        <authorList>
            <person name="Dujon B."/>
            <person name="Sherman D."/>
            <person name="Fischer G."/>
            <person name="Durrens P."/>
            <person name="Casaregola S."/>
            <person name="Lafontaine I."/>
            <person name="de Montigny J."/>
            <person name="Marck C."/>
            <person name="Neuveglise C."/>
            <person name="Talla E."/>
            <person name="Goffard N."/>
            <person name="Frangeul L."/>
            <person name="Aigle M."/>
            <person name="Anthouard V."/>
            <person name="Babour A."/>
            <person name="Barbe V."/>
            <person name="Barnay S."/>
            <person name="Blanchin S."/>
            <person name="Beckerich J.-M."/>
            <person name="Beyne E."/>
            <person name="Bleykasten C."/>
            <person name="Boisrame A."/>
            <person name="Boyer J."/>
            <person name="Cattolico L."/>
            <person name="Confanioleri F."/>
            <person name="de Daruvar A."/>
            <person name="Despons L."/>
            <person name="Fabre E."/>
            <person name="Fairhead C."/>
            <person name="Ferry-Dumazet H."/>
            <person name="Groppi A."/>
            <person name="Hantraye F."/>
            <person name="Hennequin C."/>
            <person name="Jauniaux N."/>
            <person name="Joyet P."/>
            <person name="Kachouri R."/>
            <person name="Kerrest A."/>
            <person name="Koszul R."/>
            <person name="Lemaire M."/>
            <person name="Lesur I."/>
            <person name="Ma L."/>
            <person name="Muller H."/>
            <person name="Nicaud J.-M."/>
            <person name="Nikolski M."/>
            <person name="Oztas S."/>
            <person name="Ozier-Kalogeropoulos O."/>
            <person name="Pellenz S."/>
            <person name="Potier S."/>
            <person name="Richard G.-F."/>
            <person name="Straub M.-L."/>
            <person name="Suleau A."/>
            <person name="Swennen D."/>
            <person name="Tekaia F."/>
            <person name="Wesolowski-Louvel M."/>
            <person name="Westhof E."/>
            <person name="Wirth B."/>
            <person name="Zeniou-Meyer M."/>
            <person name="Zivanovic Y."/>
            <person name="Bolotin-Fukuhara M."/>
            <person name="Thierry A."/>
            <person name="Bouchier C."/>
            <person name="Caudron B."/>
            <person name="Scarpelli C."/>
            <person name="Gaillardin C."/>
            <person name="Weissenbach J."/>
            <person name="Wincker P."/>
            <person name="Souciet J.-L."/>
        </authorList>
    </citation>
    <scope>NUCLEOTIDE SEQUENCE [LARGE SCALE GENOMIC DNA]</scope>
    <source>
        <strain>CLIB 122 / E 150</strain>
    </source>
</reference>
<gene>
    <name type="primary">CYM1</name>
    <name type="ordered locus">YALI0F21615g</name>
</gene>
<sequence>MLRLKSLKKPVQAVVRRFATTSAPTLSVGDNIHGFNVLRTKEIPEFDLQATLLEHSTGAQHLHIARDDSNNVFSIGFKTNPPDRTGVPHILEHTTLCGSEKYQVRDPFFKMLNRSLANFMNAMTAQDYTFYPFATTNATDMKNLRDVYLDATLKPLLRELDFSQEGWRLENEDSKDKTSPIILKGVVFNEMKGQMSNAAYAFYIRYLEKIYPSLNNSGGDPLVIPELTYEGLKKFHADHYNPSNAKTFSYGDISVADHLEALNAKFENCEISKTPGNTERLPLEFSSAAENTRIVEEGPIDTLLDTSKQHKMSMSWLMGSPKDIYESFCVKIISSLLIDGHSSPLHQKLIDSGLGSSYSPNTGLDSAPGANIFSVGLQGVTESDLTKVETVILDTIKTTVAEGFDKGRIDGLLHQTELARKDQNAKFGMALMNGVLPGWFNQVDPLEALEWNSVLDRFNKDMEADPEFLQKVMKKYLLDNKYFHFQMNPNPDYEKNVQEKEDEILTDKLAKLTESDKEEIFETGANLEKMQEEPENLDCLPTLHVSDIPRSKPRVALEHTKNPYPIQWRLAPTNGLTYFHSISSLEGLPHEYYPFLPLFTSSLTFLGTKDKTMGQLEDEIKLNTGGLDFSVSCSSSPLSLPSSQLNFAMDGVALDKNVETMFGLFQELLRNTDFTNVEKLKTMIAASTANLSNALAQSGHSFAMLRAASDISPVKKIDDILGGVAQVRFLSELAAKSEQQLVDEVIPKLQEIAKFALTREQRFAVTCGQDMQTKNDELVRKFAESFETNESPFNISSLSIPMTTPTSTLFKLPFQVNYAGIAIPGVPYTHADGAPLQVLANMLTHKHLHREIREKGGAYGGGASYNPTDGFFSYYSYRDPNLERTLQTCQEAGEWSVKKDWSSSDLQEAKLSLFQRIDAPISVKSEGMALYANGLTYEQREKRRRQLLDVAVDDVKRVAKQYLVNPSGYSVAALGPGYETMDKKKWTVLE</sequence>
<keyword id="KW-0378">Hydrolase</keyword>
<keyword id="KW-0479">Metal-binding</keyword>
<keyword id="KW-0482">Metalloprotease</keyword>
<keyword id="KW-0496">Mitochondrion</keyword>
<keyword id="KW-0645">Protease</keyword>
<keyword id="KW-1185">Reference proteome</keyword>
<keyword id="KW-0809">Transit peptide</keyword>
<keyword id="KW-0862">Zinc</keyword>
<name>PREP_YARLI</name>
<feature type="transit peptide" description="Mitochondrion" evidence="5">
    <location>
        <begin position="1"/>
        <end position="25"/>
    </location>
</feature>
<feature type="chain" id="PRO_0000249950" description="Presequence protease, mitochondrial">
    <location>
        <begin position="26"/>
        <end position="990"/>
    </location>
</feature>
<feature type="active site" description="Proton acceptor" evidence="3">
    <location>
        <position position="92"/>
    </location>
</feature>
<feature type="active site" evidence="4">
    <location>
        <position position="165"/>
    </location>
</feature>
<feature type="binding site" evidence="3">
    <location>
        <position position="89"/>
    </location>
    <ligand>
        <name>Zn(2+)</name>
        <dbReference type="ChEBI" id="CHEBI:29105"/>
        <note>catalytic</note>
    </ligand>
</feature>
<feature type="binding site" evidence="3">
    <location>
        <position position="93"/>
    </location>
    <ligand>
        <name>Zn(2+)</name>
        <dbReference type="ChEBI" id="CHEBI:29105"/>
        <note>catalytic</note>
    </ligand>
</feature>
<feature type="binding site" evidence="3">
    <location>
        <position position="190"/>
    </location>
    <ligand>
        <name>Zn(2+)</name>
        <dbReference type="ChEBI" id="CHEBI:29105"/>
        <note>catalytic</note>
    </ligand>
</feature>
<accession>Q6C0U8</accession>
<proteinExistence type="inferred from homology"/>
<organism>
    <name type="scientific">Yarrowia lipolytica (strain CLIB 122 / E 150)</name>
    <name type="common">Yeast</name>
    <name type="synonym">Candida lipolytica</name>
    <dbReference type="NCBI Taxonomy" id="284591"/>
    <lineage>
        <taxon>Eukaryota</taxon>
        <taxon>Fungi</taxon>
        <taxon>Dikarya</taxon>
        <taxon>Ascomycota</taxon>
        <taxon>Saccharomycotina</taxon>
        <taxon>Dipodascomycetes</taxon>
        <taxon>Dipodascales</taxon>
        <taxon>Dipodascales incertae sedis</taxon>
        <taxon>Yarrowia</taxon>
    </lineage>
</organism>
<dbReference type="EC" id="3.4.24.-" evidence="2"/>
<dbReference type="EMBL" id="CR382132">
    <property type="protein sequence ID" value="CAG78525.1"/>
    <property type="molecule type" value="Genomic_DNA"/>
</dbReference>
<dbReference type="RefSeq" id="XP_505714.1">
    <property type="nucleotide sequence ID" value="XM_505714.1"/>
</dbReference>
<dbReference type="SMR" id="Q6C0U8"/>
<dbReference type="FunCoup" id="Q6C0U8">
    <property type="interactions" value="683"/>
</dbReference>
<dbReference type="STRING" id="284591.Q6C0U8"/>
<dbReference type="EnsemblFungi" id="CAG78525">
    <property type="protein sequence ID" value="CAG78525"/>
    <property type="gene ID" value="YALI0_F21615g"/>
</dbReference>
<dbReference type="KEGG" id="yli:2907820"/>
<dbReference type="VEuPathDB" id="FungiDB:YALI0_F21615g"/>
<dbReference type="HOGENOM" id="CLU_009165_0_0_1"/>
<dbReference type="InParanoid" id="Q6C0U8"/>
<dbReference type="OMA" id="FPFQVHY"/>
<dbReference type="OrthoDB" id="1408at4891"/>
<dbReference type="Proteomes" id="UP000001300">
    <property type="component" value="Chromosome F"/>
</dbReference>
<dbReference type="GO" id="GO:0005758">
    <property type="term" value="C:mitochondrial intermembrane space"/>
    <property type="evidence" value="ECO:0007669"/>
    <property type="project" value="UniProtKB-SubCell"/>
</dbReference>
<dbReference type="GO" id="GO:0005759">
    <property type="term" value="C:mitochondrial matrix"/>
    <property type="evidence" value="ECO:0000318"/>
    <property type="project" value="GO_Central"/>
</dbReference>
<dbReference type="GO" id="GO:0004176">
    <property type="term" value="F:ATP-dependent peptidase activity"/>
    <property type="evidence" value="ECO:0007669"/>
    <property type="project" value="EnsemblFungi"/>
</dbReference>
<dbReference type="GO" id="GO:0004222">
    <property type="term" value="F:metalloendopeptidase activity"/>
    <property type="evidence" value="ECO:0000318"/>
    <property type="project" value="GO_Central"/>
</dbReference>
<dbReference type="GO" id="GO:0008270">
    <property type="term" value="F:zinc ion binding"/>
    <property type="evidence" value="ECO:0000250"/>
    <property type="project" value="UniProtKB"/>
</dbReference>
<dbReference type="GO" id="GO:0034982">
    <property type="term" value="P:mitochondrial protein processing"/>
    <property type="evidence" value="ECO:0007669"/>
    <property type="project" value="EnsemblFungi"/>
</dbReference>
<dbReference type="GO" id="GO:0016485">
    <property type="term" value="P:protein processing"/>
    <property type="evidence" value="ECO:0000250"/>
    <property type="project" value="UniProtKB"/>
</dbReference>
<dbReference type="GO" id="GO:0051603">
    <property type="term" value="P:proteolysis involved in protein catabolic process"/>
    <property type="evidence" value="ECO:0007669"/>
    <property type="project" value="EnsemblFungi"/>
</dbReference>
<dbReference type="FunFam" id="3.30.830.10:FF:000013">
    <property type="entry name" value="Mitochondrial presequence protease"/>
    <property type="match status" value="1"/>
</dbReference>
<dbReference type="FunFam" id="3.30.830.10:FF:000009">
    <property type="entry name" value="Presequence protease, mitochondrial"/>
    <property type="match status" value="1"/>
</dbReference>
<dbReference type="FunFam" id="3.30.830.10:FF:000011">
    <property type="entry name" value="Presequence protease, mitochondrial"/>
    <property type="match status" value="1"/>
</dbReference>
<dbReference type="Gene3D" id="3.30.830.10">
    <property type="entry name" value="Metalloenzyme, LuxS/M16 peptidase-like"/>
    <property type="match status" value="4"/>
</dbReference>
<dbReference type="InterPro" id="IPR011249">
    <property type="entry name" value="Metalloenz_LuxS/M16"/>
</dbReference>
<dbReference type="InterPro" id="IPR011765">
    <property type="entry name" value="Pept_M16_N"/>
</dbReference>
<dbReference type="InterPro" id="IPR007863">
    <property type="entry name" value="Peptidase_M16_C"/>
</dbReference>
<dbReference type="InterPro" id="IPR013578">
    <property type="entry name" value="Peptidase_M16C_assoc"/>
</dbReference>
<dbReference type="InterPro" id="IPR055130">
    <property type="entry name" value="PreP_C"/>
</dbReference>
<dbReference type="PANTHER" id="PTHR43016">
    <property type="entry name" value="PRESEQUENCE PROTEASE"/>
    <property type="match status" value="1"/>
</dbReference>
<dbReference type="PANTHER" id="PTHR43016:SF13">
    <property type="entry name" value="PRESEQUENCE PROTEASE, MITOCHONDRIAL"/>
    <property type="match status" value="1"/>
</dbReference>
<dbReference type="Pfam" id="PF08367">
    <property type="entry name" value="M16C_assoc"/>
    <property type="match status" value="1"/>
</dbReference>
<dbReference type="Pfam" id="PF00675">
    <property type="entry name" value="Peptidase_M16"/>
    <property type="match status" value="1"/>
</dbReference>
<dbReference type="Pfam" id="PF05193">
    <property type="entry name" value="Peptidase_M16_C"/>
    <property type="match status" value="1"/>
</dbReference>
<dbReference type="Pfam" id="PF22516">
    <property type="entry name" value="PreP_C"/>
    <property type="match status" value="1"/>
</dbReference>
<dbReference type="SMART" id="SM01264">
    <property type="entry name" value="M16C_associated"/>
    <property type="match status" value="1"/>
</dbReference>
<dbReference type="SUPFAM" id="SSF63411">
    <property type="entry name" value="LuxS/MPP-like metallohydrolase"/>
    <property type="match status" value="4"/>
</dbReference>